<organism>
    <name type="scientific">Roseobacter denitrificans (strain ATCC 33942 / OCh 114)</name>
    <name type="common">Erythrobacter sp. (strain OCh 114)</name>
    <name type="synonym">Roseobacter denitrificans</name>
    <dbReference type="NCBI Taxonomy" id="375451"/>
    <lineage>
        <taxon>Bacteria</taxon>
        <taxon>Pseudomonadati</taxon>
        <taxon>Pseudomonadota</taxon>
        <taxon>Alphaproteobacteria</taxon>
        <taxon>Rhodobacterales</taxon>
        <taxon>Roseobacteraceae</taxon>
        <taxon>Roseobacter</taxon>
    </lineage>
</organism>
<comment type="function">
    <text evidence="1">Catalyzes the oxidation of either pyridoxine 5'-phosphate (PNP) or pyridoxamine 5'-phosphate (PMP) into pyridoxal 5'-phosphate (PLP).</text>
</comment>
<comment type="catalytic activity">
    <reaction evidence="1">
        <text>pyridoxamine 5'-phosphate + O2 + H2O = pyridoxal 5'-phosphate + H2O2 + NH4(+)</text>
        <dbReference type="Rhea" id="RHEA:15817"/>
        <dbReference type="ChEBI" id="CHEBI:15377"/>
        <dbReference type="ChEBI" id="CHEBI:15379"/>
        <dbReference type="ChEBI" id="CHEBI:16240"/>
        <dbReference type="ChEBI" id="CHEBI:28938"/>
        <dbReference type="ChEBI" id="CHEBI:58451"/>
        <dbReference type="ChEBI" id="CHEBI:597326"/>
        <dbReference type="EC" id="1.4.3.5"/>
    </reaction>
</comment>
<comment type="catalytic activity">
    <reaction evidence="1">
        <text>pyridoxine 5'-phosphate + O2 = pyridoxal 5'-phosphate + H2O2</text>
        <dbReference type="Rhea" id="RHEA:15149"/>
        <dbReference type="ChEBI" id="CHEBI:15379"/>
        <dbReference type="ChEBI" id="CHEBI:16240"/>
        <dbReference type="ChEBI" id="CHEBI:58589"/>
        <dbReference type="ChEBI" id="CHEBI:597326"/>
        <dbReference type="EC" id="1.4.3.5"/>
    </reaction>
</comment>
<comment type="cofactor">
    <cofactor evidence="1">
        <name>FMN</name>
        <dbReference type="ChEBI" id="CHEBI:58210"/>
    </cofactor>
    <text evidence="1">Binds 1 FMN per subunit.</text>
</comment>
<comment type="pathway">
    <text evidence="1">Cofactor metabolism; pyridoxal 5'-phosphate salvage; pyridoxal 5'-phosphate from pyridoxamine 5'-phosphate: step 1/1.</text>
</comment>
<comment type="pathway">
    <text evidence="1">Cofactor metabolism; pyridoxal 5'-phosphate salvage; pyridoxal 5'-phosphate from pyridoxine 5'-phosphate: step 1/1.</text>
</comment>
<comment type="subunit">
    <text evidence="1">Homodimer.</text>
</comment>
<comment type="similarity">
    <text evidence="1">Belongs to the pyridoxamine 5'-phosphate oxidase family.</text>
</comment>
<proteinExistence type="inferred from homology"/>
<name>PDXH_ROSDO</name>
<keyword id="KW-0285">Flavoprotein</keyword>
<keyword id="KW-0288">FMN</keyword>
<keyword id="KW-0560">Oxidoreductase</keyword>
<keyword id="KW-0664">Pyridoxine biosynthesis</keyword>
<keyword id="KW-1185">Reference proteome</keyword>
<dbReference type="EC" id="1.4.3.5" evidence="1"/>
<dbReference type="EMBL" id="CP000362">
    <property type="protein sequence ID" value="ABG32702.1"/>
    <property type="molecule type" value="Genomic_DNA"/>
</dbReference>
<dbReference type="RefSeq" id="WP_011569318.1">
    <property type="nucleotide sequence ID" value="NC_008209.1"/>
</dbReference>
<dbReference type="SMR" id="Q163Z1"/>
<dbReference type="STRING" id="375451.RD1_3198"/>
<dbReference type="KEGG" id="rde:RD1_3198"/>
<dbReference type="eggNOG" id="COG0259">
    <property type="taxonomic scope" value="Bacteria"/>
</dbReference>
<dbReference type="HOGENOM" id="CLU_032263_2_3_5"/>
<dbReference type="OrthoDB" id="9780392at2"/>
<dbReference type="UniPathway" id="UPA01068">
    <property type="reaction ID" value="UER00304"/>
</dbReference>
<dbReference type="UniPathway" id="UPA01068">
    <property type="reaction ID" value="UER00305"/>
</dbReference>
<dbReference type="Proteomes" id="UP000007029">
    <property type="component" value="Chromosome"/>
</dbReference>
<dbReference type="GO" id="GO:0010181">
    <property type="term" value="F:FMN binding"/>
    <property type="evidence" value="ECO:0007669"/>
    <property type="project" value="UniProtKB-UniRule"/>
</dbReference>
<dbReference type="GO" id="GO:0004733">
    <property type="term" value="F:pyridoxamine phosphate oxidase activity"/>
    <property type="evidence" value="ECO:0007669"/>
    <property type="project" value="UniProtKB-UniRule"/>
</dbReference>
<dbReference type="GO" id="GO:0008615">
    <property type="term" value="P:pyridoxine biosynthetic process"/>
    <property type="evidence" value="ECO:0007669"/>
    <property type="project" value="UniProtKB-KW"/>
</dbReference>
<dbReference type="Gene3D" id="2.30.110.10">
    <property type="entry name" value="Electron Transport, Fmn-binding Protein, Chain A"/>
    <property type="match status" value="1"/>
</dbReference>
<dbReference type="HAMAP" id="MF_01629">
    <property type="entry name" value="PdxH"/>
    <property type="match status" value="1"/>
</dbReference>
<dbReference type="InterPro" id="IPR000659">
    <property type="entry name" value="Pyridox_Oxase"/>
</dbReference>
<dbReference type="InterPro" id="IPR019740">
    <property type="entry name" value="Pyridox_Oxase_CS"/>
</dbReference>
<dbReference type="InterPro" id="IPR011576">
    <property type="entry name" value="Pyridox_Oxase_N"/>
</dbReference>
<dbReference type="InterPro" id="IPR019576">
    <property type="entry name" value="Pyridoxamine_oxidase_dimer_C"/>
</dbReference>
<dbReference type="InterPro" id="IPR012349">
    <property type="entry name" value="Split_barrel_FMN-bd"/>
</dbReference>
<dbReference type="NCBIfam" id="TIGR00558">
    <property type="entry name" value="pdxH"/>
    <property type="match status" value="1"/>
</dbReference>
<dbReference type="NCBIfam" id="NF004231">
    <property type="entry name" value="PRK05679.1"/>
    <property type="match status" value="1"/>
</dbReference>
<dbReference type="PANTHER" id="PTHR10851:SF0">
    <property type="entry name" value="PYRIDOXINE-5'-PHOSPHATE OXIDASE"/>
    <property type="match status" value="1"/>
</dbReference>
<dbReference type="PANTHER" id="PTHR10851">
    <property type="entry name" value="PYRIDOXINE-5-PHOSPHATE OXIDASE"/>
    <property type="match status" value="1"/>
</dbReference>
<dbReference type="Pfam" id="PF10590">
    <property type="entry name" value="PNP_phzG_C"/>
    <property type="match status" value="1"/>
</dbReference>
<dbReference type="Pfam" id="PF01243">
    <property type="entry name" value="PNPOx_N"/>
    <property type="match status" value="1"/>
</dbReference>
<dbReference type="PIRSF" id="PIRSF000190">
    <property type="entry name" value="Pyd_amn-ph_oxd"/>
    <property type="match status" value="1"/>
</dbReference>
<dbReference type="SUPFAM" id="SSF50475">
    <property type="entry name" value="FMN-binding split barrel"/>
    <property type="match status" value="1"/>
</dbReference>
<dbReference type="PROSITE" id="PS01064">
    <property type="entry name" value="PYRIDOX_OXIDASE"/>
    <property type="match status" value="1"/>
</dbReference>
<reference key="1">
    <citation type="journal article" date="2007" name="J. Bacteriol.">
        <title>The complete genome sequence of Roseobacter denitrificans reveals a mixotrophic rather than photosynthetic metabolism.</title>
        <authorList>
            <person name="Swingley W.D."/>
            <person name="Sadekar S."/>
            <person name="Mastrian S.D."/>
            <person name="Matthies H.J."/>
            <person name="Hao J."/>
            <person name="Ramos H."/>
            <person name="Acharya C.R."/>
            <person name="Conrad A.L."/>
            <person name="Taylor H.L."/>
            <person name="Dejesa L.C."/>
            <person name="Shah M.K."/>
            <person name="O'Huallachain M.E."/>
            <person name="Lince M.T."/>
            <person name="Blankenship R.E."/>
            <person name="Beatty J.T."/>
            <person name="Touchman J.W."/>
        </authorList>
    </citation>
    <scope>NUCLEOTIDE SEQUENCE [LARGE SCALE GENOMIC DNA]</scope>
    <source>
        <strain>ATCC 33942 / OCh 114</strain>
    </source>
</reference>
<evidence type="ECO:0000255" key="1">
    <source>
        <dbReference type="HAMAP-Rule" id="MF_01629"/>
    </source>
</evidence>
<accession>Q163Z1</accession>
<gene>
    <name evidence="1" type="primary">pdxH</name>
    <name type="ordered locus">RD1_3198</name>
</gene>
<feature type="chain" id="PRO_0000255887" description="Pyridoxine/pyridoxamine 5'-phosphate oxidase">
    <location>
        <begin position="1"/>
        <end position="201"/>
    </location>
</feature>
<feature type="binding site" evidence="1">
    <location>
        <begin position="49"/>
        <end position="54"/>
    </location>
    <ligand>
        <name>FMN</name>
        <dbReference type="ChEBI" id="CHEBI:58210"/>
    </ligand>
</feature>
<feature type="binding site" evidence="1">
    <location>
        <position position="54"/>
    </location>
    <ligand>
        <name>substrate</name>
    </ligand>
</feature>
<feature type="binding site" evidence="1">
    <location>
        <begin position="64"/>
        <end position="65"/>
    </location>
    <ligand>
        <name>FMN</name>
        <dbReference type="ChEBI" id="CHEBI:58210"/>
    </ligand>
</feature>
<feature type="binding site" evidence="1">
    <location>
        <position position="71"/>
    </location>
    <ligand>
        <name>FMN</name>
        <dbReference type="ChEBI" id="CHEBI:58210"/>
    </ligand>
</feature>
<feature type="binding site" evidence="1">
    <location>
        <position position="93"/>
    </location>
    <ligand>
        <name>FMN</name>
        <dbReference type="ChEBI" id="CHEBI:58210"/>
    </ligand>
</feature>
<feature type="binding site" evidence="1">
    <location>
        <position position="111"/>
    </location>
    <ligand>
        <name>substrate</name>
    </ligand>
</feature>
<feature type="binding site" evidence="1">
    <location>
        <position position="115"/>
    </location>
    <ligand>
        <name>substrate</name>
    </ligand>
</feature>
<feature type="binding site" evidence="1">
    <location>
        <position position="119"/>
    </location>
    <ligand>
        <name>substrate</name>
    </ligand>
</feature>
<feature type="binding site" evidence="1">
    <location>
        <begin position="128"/>
        <end position="129"/>
    </location>
    <ligand>
        <name>FMN</name>
        <dbReference type="ChEBI" id="CHEBI:58210"/>
    </ligand>
</feature>
<feature type="binding site" evidence="1">
    <location>
        <position position="172"/>
    </location>
    <ligand>
        <name>FMN</name>
        <dbReference type="ChEBI" id="CHEBI:58210"/>
    </ligand>
</feature>
<feature type="binding site" evidence="1">
    <location>
        <begin position="178"/>
        <end position="180"/>
    </location>
    <ligand>
        <name>substrate</name>
    </ligand>
</feature>
<feature type="binding site" evidence="1">
    <location>
        <position position="182"/>
    </location>
    <ligand>
        <name>FMN</name>
        <dbReference type="ChEBI" id="CHEBI:58210"/>
    </ligand>
</feature>
<protein>
    <recommendedName>
        <fullName evidence="1">Pyridoxine/pyridoxamine 5'-phosphate oxidase</fullName>
        <ecNumber evidence="1">1.4.3.5</ecNumber>
    </recommendedName>
    <alternativeName>
        <fullName evidence="1">PNP/PMP oxidase</fullName>
        <shortName evidence="1">PNPOx</shortName>
    </alternativeName>
    <alternativeName>
        <fullName evidence="1">Pyridoxal 5'-phosphate synthase</fullName>
    </alternativeName>
</protein>
<sequence length="201" mass="22626">MTERTGKFAGDNPFTIAESWLAEAQESEVNDPNAIALSTVDADGMPNARMVLLKGVEPDAFVFYTNYESAKARELDGAGKAAFVMHWKSLRRQIRVRGHVSREDGDAADAYFASRSLKSRLGAWASKQSRPLSSRAALMAEVAKMTATHGTNPKRPPFWGGFRITPVEIEFWADGDFRLHDRFVWRRETPQSEWHVTRLNP</sequence>